<proteinExistence type="inferred from homology"/>
<evidence type="ECO:0000250" key="1"/>
<evidence type="ECO:0000305" key="2"/>
<accession>P56026</accession>
<protein>
    <recommendedName>
        <fullName evidence="2">Small ribosomal subunit protein uS19</fullName>
    </recommendedName>
    <alternativeName>
        <fullName>30S ribosomal protein S19</fullName>
    </alternativeName>
</protein>
<keyword id="KW-1185">Reference proteome</keyword>
<keyword id="KW-0687">Ribonucleoprotein</keyword>
<keyword id="KW-0689">Ribosomal protein</keyword>
<keyword id="KW-0694">RNA-binding</keyword>
<keyword id="KW-0699">rRNA-binding</keyword>
<dbReference type="EMBL" id="AE000511">
    <property type="protein sequence ID" value="AAD08354.1"/>
    <property type="molecule type" value="Genomic_DNA"/>
</dbReference>
<dbReference type="PIR" id="C64684">
    <property type="entry name" value="C64684"/>
</dbReference>
<dbReference type="RefSeq" id="NP_208107.1">
    <property type="nucleotide sequence ID" value="NC_000915.1"/>
</dbReference>
<dbReference type="RefSeq" id="WP_000091384.1">
    <property type="nucleotide sequence ID" value="NC_018939.1"/>
</dbReference>
<dbReference type="SMR" id="P56026"/>
<dbReference type="FunCoup" id="P56026">
    <property type="interactions" value="360"/>
</dbReference>
<dbReference type="STRING" id="85962.HP_1315"/>
<dbReference type="PaxDb" id="85962-C694_06790"/>
<dbReference type="EnsemblBacteria" id="AAD08354">
    <property type="protein sequence ID" value="AAD08354"/>
    <property type="gene ID" value="HP_1315"/>
</dbReference>
<dbReference type="KEGG" id="heo:C694_06790"/>
<dbReference type="KEGG" id="hpy:HP_1315"/>
<dbReference type="PATRIC" id="fig|85962.47.peg.1409"/>
<dbReference type="eggNOG" id="COG0185">
    <property type="taxonomic scope" value="Bacteria"/>
</dbReference>
<dbReference type="InParanoid" id="P56026"/>
<dbReference type="OrthoDB" id="9797833at2"/>
<dbReference type="PhylomeDB" id="P56026"/>
<dbReference type="Proteomes" id="UP000000429">
    <property type="component" value="Chromosome"/>
</dbReference>
<dbReference type="GO" id="GO:0005737">
    <property type="term" value="C:cytoplasm"/>
    <property type="evidence" value="ECO:0007669"/>
    <property type="project" value="UniProtKB-ARBA"/>
</dbReference>
<dbReference type="GO" id="GO:0015935">
    <property type="term" value="C:small ribosomal subunit"/>
    <property type="evidence" value="ECO:0007669"/>
    <property type="project" value="InterPro"/>
</dbReference>
<dbReference type="GO" id="GO:0019843">
    <property type="term" value="F:rRNA binding"/>
    <property type="evidence" value="ECO:0007669"/>
    <property type="project" value="UniProtKB-UniRule"/>
</dbReference>
<dbReference type="GO" id="GO:0003735">
    <property type="term" value="F:structural constituent of ribosome"/>
    <property type="evidence" value="ECO:0000318"/>
    <property type="project" value="GO_Central"/>
</dbReference>
<dbReference type="GO" id="GO:0000028">
    <property type="term" value="P:ribosomal small subunit assembly"/>
    <property type="evidence" value="ECO:0000318"/>
    <property type="project" value="GO_Central"/>
</dbReference>
<dbReference type="GO" id="GO:0006412">
    <property type="term" value="P:translation"/>
    <property type="evidence" value="ECO:0007669"/>
    <property type="project" value="UniProtKB-UniRule"/>
</dbReference>
<dbReference type="FunFam" id="3.30.860.10:FF:000001">
    <property type="entry name" value="30S ribosomal protein S19"/>
    <property type="match status" value="1"/>
</dbReference>
<dbReference type="Gene3D" id="3.30.860.10">
    <property type="entry name" value="30s Ribosomal Protein S19, Chain A"/>
    <property type="match status" value="1"/>
</dbReference>
<dbReference type="HAMAP" id="MF_00531">
    <property type="entry name" value="Ribosomal_uS19"/>
    <property type="match status" value="1"/>
</dbReference>
<dbReference type="InterPro" id="IPR002222">
    <property type="entry name" value="Ribosomal_uS19"/>
</dbReference>
<dbReference type="InterPro" id="IPR005732">
    <property type="entry name" value="Ribosomal_uS19_bac-type"/>
</dbReference>
<dbReference type="InterPro" id="IPR020934">
    <property type="entry name" value="Ribosomal_uS19_CS"/>
</dbReference>
<dbReference type="InterPro" id="IPR023575">
    <property type="entry name" value="Ribosomal_uS19_SF"/>
</dbReference>
<dbReference type="NCBIfam" id="TIGR01050">
    <property type="entry name" value="rpsS_bact"/>
    <property type="match status" value="1"/>
</dbReference>
<dbReference type="PANTHER" id="PTHR11880">
    <property type="entry name" value="RIBOSOMAL PROTEIN S19P FAMILY MEMBER"/>
    <property type="match status" value="1"/>
</dbReference>
<dbReference type="PANTHER" id="PTHR11880:SF8">
    <property type="entry name" value="SMALL RIBOSOMAL SUBUNIT PROTEIN US19M"/>
    <property type="match status" value="1"/>
</dbReference>
<dbReference type="Pfam" id="PF00203">
    <property type="entry name" value="Ribosomal_S19"/>
    <property type="match status" value="1"/>
</dbReference>
<dbReference type="PIRSF" id="PIRSF002144">
    <property type="entry name" value="Ribosomal_S19"/>
    <property type="match status" value="1"/>
</dbReference>
<dbReference type="PRINTS" id="PR00975">
    <property type="entry name" value="RIBOSOMALS19"/>
</dbReference>
<dbReference type="SUPFAM" id="SSF54570">
    <property type="entry name" value="Ribosomal protein S19"/>
    <property type="match status" value="1"/>
</dbReference>
<dbReference type="PROSITE" id="PS00323">
    <property type="entry name" value="RIBOSOMAL_S19"/>
    <property type="match status" value="1"/>
</dbReference>
<organism>
    <name type="scientific">Helicobacter pylori (strain ATCC 700392 / 26695)</name>
    <name type="common">Campylobacter pylori</name>
    <dbReference type="NCBI Taxonomy" id="85962"/>
    <lineage>
        <taxon>Bacteria</taxon>
        <taxon>Pseudomonadati</taxon>
        <taxon>Campylobacterota</taxon>
        <taxon>Epsilonproteobacteria</taxon>
        <taxon>Campylobacterales</taxon>
        <taxon>Helicobacteraceae</taxon>
        <taxon>Helicobacter</taxon>
    </lineage>
</organism>
<reference key="1">
    <citation type="journal article" date="1997" name="Nature">
        <title>The complete genome sequence of the gastric pathogen Helicobacter pylori.</title>
        <authorList>
            <person name="Tomb J.-F."/>
            <person name="White O."/>
            <person name="Kerlavage A.R."/>
            <person name="Clayton R.A."/>
            <person name="Sutton G.G."/>
            <person name="Fleischmann R.D."/>
            <person name="Ketchum K.A."/>
            <person name="Klenk H.-P."/>
            <person name="Gill S.R."/>
            <person name="Dougherty B.A."/>
            <person name="Nelson K.E."/>
            <person name="Quackenbush J."/>
            <person name="Zhou L."/>
            <person name="Kirkness E.F."/>
            <person name="Peterson S.N."/>
            <person name="Loftus B.J."/>
            <person name="Richardson D.L."/>
            <person name="Dodson R.J."/>
            <person name="Khalak H.G."/>
            <person name="Glodek A."/>
            <person name="McKenney K."/>
            <person name="FitzGerald L.M."/>
            <person name="Lee N."/>
            <person name="Adams M.D."/>
            <person name="Hickey E.K."/>
            <person name="Berg D.E."/>
            <person name="Gocayne J.D."/>
            <person name="Utterback T.R."/>
            <person name="Peterson J.D."/>
            <person name="Kelley J.M."/>
            <person name="Cotton M.D."/>
            <person name="Weidman J.F."/>
            <person name="Fujii C."/>
            <person name="Bowman C."/>
            <person name="Watthey L."/>
            <person name="Wallin E."/>
            <person name="Hayes W.S."/>
            <person name="Borodovsky M."/>
            <person name="Karp P.D."/>
            <person name="Smith H.O."/>
            <person name="Fraser C.M."/>
            <person name="Venter J.C."/>
        </authorList>
    </citation>
    <scope>NUCLEOTIDE SEQUENCE [LARGE SCALE GENOMIC DNA]</scope>
    <source>
        <strain>ATCC 700392 / 26695</strain>
    </source>
</reference>
<sequence length="93" mass="10688">MSRSIKKGPFIDDHLMKKTLKAKEGKDNRPIKTWSRRSTILPEMIGFTYNVHNGRVFIPVYITENHVGYKLGEFAPTRTFKGHKGSVQKKIGK</sequence>
<gene>
    <name type="primary">rpsS</name>
    <name type="ordered locus">HP_1315</name>
</gene>
<feature type="chain" id="PRO_0000129833" description="Small ribosomal subunit protein uS19">
    <location>
        <begin position="1"/>
        <end position="93"/>
    </location>
</feature>
<comment type="function">
    <text evidence="1">Protein S19 forms a complex with S13 that binds strongly to the 16S ribosomal RNA.</text>
</comment>
<comment type="similarity">
    <text evidence="2">Belongs to the universal ribosomal protein uS19 family.</text>
</comment>
<name>RS19_HELPY</name>